<sequence length="50" mass="5748">MYKLWLLFDPRRALVALSAFLFVLALIIHFIALSTDRFNWLEGKPAVKAA</sequence>
<evidence type="ECO:0000255" key="1"/>
<evidence type="ECO:0000305" key="2"/>
<comment type="function">
    <text>Antenna complexes are light-harvesting systems, which transfer the excitation energy to the reaction centers.</text>
</comment>
<comment type="subunit">
    <text>The core complex is formed by different alpha and beta chains, binding bacteriochlorophyll molecules, and arranged most probably in tetrameric structures disposed around the reaction center. The non-pigmented gamma chains may constitute additional components.</text>
</comment>
<comment type="subcellular location">
    <subcellularLocation>
        <location>Cell inner membrane</location>
        <topology>Single-pass type II membrane protein</topology>
    </subcellularLocation>
</comment>
<comment type="similarity">
    <text evidence="2">Belongs to the antenna complex alpha subunit family.</text>
</comment>
<keyword id="KW-0042">Antenna complex</keyword>
<keyword id="KW-0076">Bacteriochlorophyll</keyword>
<keyword id="KW-0997">Cell inner membrane</keyword>
<keyword id="KW-1003">Cell membrane</keyword>
<keyword id="KW-0148">Chlorophyll</keyword>
<keyword id="KW-0157">Chromophore</keyword>
<keyword id="KW-0903">Direct protein sequencing</keyword>
<keyword id="KW-0437">Light-harvesting polypeptide</keyword>
<keyword id="KW-0460">Magnesium</keyword>
<keyword id="KW-0472">Membrane</keyword>
<keyword id="KW-0479">Metal-binding</keyword>
<keyword id="KW-0812">Transmembrane</keyword>
<keyword id="KW-1133">Transmembrane helix</keyword>
<protein>
    <recommendedName>
        <fullName>Light-harvesting protein B-880 alpha chain</fullName>
    </recommendedName>
    <alternativeName>
        <fullName>Antenna pigment protein alpha chain</fullName>
    </alternativeName>
</protein>
<organism>
    <name type="scientific">Rhodoblastus acidophilus</name>
    <name type="common">Rhodopseudomonas acidophila</name>
    <dbReference type="NCBI Taxonomy" id="1074"/>
    <lineage>
        <taxon>Bacteria</taxon>
        <taxon>Pseudomonadati</taxon>
        <taxon>Pseudomonadota</taxon>
        <taxon>Alphaproteobacteria</taxon>
        <taxon>Hyphomicrobiales</taxon>
        <taxon>Rhodoblastaceae</taxon>
        <taxon>Rhodoblastus</taxon>
    </lineage>
</organism>
<reference key="1">
    <citation type="journal article" date="1992" name="Eur. J. Biochem.">
        <title>The primary structure of the antenna polypeptides of Ectothiorhodospira halochloris and Ectothiorhodospira halophila. Four core-type antenna polypeptides in E. halochloris and E. halophila.</title>
        <authorList>
            <person name="Wagner-Huber R."/>
            <person name="Brunisholz R.A."/>
            <person name="Bissig I."/>
            <person name="Frank G."/>
            <person name="Suter F."/>
            <person name="Zuber H."/>
        </authorList>
    </citation>
    <scope>PROTEIN SEQUENCE</scope>
    <source>
        <strain>ATCC 25092 / 7050 / DSM 137 / LMG 4304 / NCIB 11761</strain>
    </source>
</reference>
<name>LHA6_RHOAC</name>
<proteinExistence type="evidence at protein level"/>
<dbReference type="SMR" id="P35092"/>
<dbReference type="GO" id="GO:0019866">
    <property type="term" value="C:organelle inner membrane"/>
    <property type="evidence" value="ECO:0007669"/>
    <property type="project" value="InterPro"/>
</dbReference>
<dbReference type="GO" id="GO:0005886">
    <property type="term" value="C:plasma membrane"/>
    <property type="evidence" value="ECO:0007669"/>
    <property type="project" value="UniProtKB-SubCell"/>
</dbReference>
<dbReference type="GO" id="GO:0030077">
    <property type="term" value="C:plasma membrane light-harvesting complex"/>
    <property type="evidence" value="ECO:0007669"/>
    <property type="project" value="InterPro"/>
</dbReference>
<dbReference type="GO" id="GO:0042314">
    <property type="term" value="F:bacteriochlorophyll binding"/>
    <property type="evidence" value="ECO:0007669"/>
    <property type="project" value="UniProtKB-KW"/>
</dbReference>
<dbReference type="GO" id="GO:0045156">
    <property type="term" value="F:electron transporter, transferring electrons within the cyclic electron transport pathway of photosynthesis activity"/>
    <property type="evidence" value="ECO:0007669"/>
    <property type="project" value="InterPro"/>
</dbReference>
<dbReference type="GO" id="GO:0046872">
    <property type="term" value="F:metal ion binding"/>
    <property type="evidence" value="ECO:0007669"/>
    <property type="project" value="UniProtKB-KW"/>
</dbReference>
<dbReference type="GO" id="GO:0019684">
    <property type="term" value="P:photosynthesis, light reaction"/>
    <property type="evidence" value="ECO:0007669"/>
    <property type="project" value="InterPro"/>
</dbReference>
<dbReference type="Gene3D" id="4.10.220.20">
    <property type="entry name" value="Light-harvesting complex"/>
    <property type="match status" value="1"/>
</dbReference>
<dbReference type="InterPro" id="IPR000066">
    <property type="entry name" value="Antenna_a/b"/>
</dbReference>
<dbReference type="InterPro" id="IPR018332">
    <property type="entry name" value="Antenna_alpha"/>
</dbReference>
<dbReference type="InterPro" id="IPR002361">
    <property type="entry name" value="Antenna_alpha_CS"/>
</dbReference>
<dbReference type="InterPro" id="IPR035889">
    <property type="entry name" value="Light-harvesting_complex"/>
</dbReference>
<dbReference type="NCBIfam" id="NF040861">
    <property type="entry name" value="pufA_517_ASD"/>
    <property type="match status" value="1"/>
</dbReference>
<dbReference type="Pfam" id="PF00556">
    <property type="entry name" value="LHC"/>
    <property type="match status" value="1"/>
</dbReference>
<dbReference type="PRINTS" id="PR00673">
    <property type="entry name" value="LIGHTHARVSTA"/>
</dbReference>
<dbReference type="SUPFAM" id="SSF56918">
    <property type="entry name" value="Light-harvesting complex subunits"/>
    <property type="match status" value="1"/>
</dbReference>
<dbReference type="PROSITE" id="PS00968">
    <property type="entry name" value="ANTENNA_COMP_ALPHA"/>
    <property type="match status" value="1"/>
</dbReference>
<accession>P35092</accession>
<feature type="chain" id="PRO_0000099788" description="Light-harvesting protein B-880 alpha chain">
    <location>
        <begin position="1"/>
        <end position="50"/>
    </location>
</feature>
<feature type="topological domain" description="Cytoplasmic" evidence="1">
    <location>
        <begin position="1"/>
        <end position="12"/>
    </location>
</feature>
<feature type="transmembrane region" description="Helical" evidence="1">
    <location>
        <begin position="13"/>
        <end position="33"/>
    </location>
</feature>
<feature type="topological domain" description="Periplasmic" evidence="1">
    <location>
        <begin position="34"/>
        <end position="50"/>
    </location>
</feature>
<feature type="binding site" description="axial binding residue" evidence="1">
    <location>
        <position position="29"/>
    </location>
    <ligand>
        <name>a bacteriochlorophyll</name>
        <dbReference type="ChEBI" id="CHEBI:38201"/>
    </ligand>
    <ligandPart>
        <name>Mg</name>
        <dbReference type="ChEBI" id="CHEBI:25107"/>
    </ligandPart>
</feature>